<evidence type="ECO:0000269" key="1">
    <source>
    </source>
</evidence>
<evidence type="ECO:0000269" key="2">
    <source>
    </source>
</evidence>
<evidence type="ECO:0000305" key="3"/>
<evidence type="ECO:0000312" key="4">
    <source>
        <dbReference type="EMBL" id="CAP74000.1"/>
    </source>
</evidence>
<evidence type="ECO:0007829" key="5">
    <source>
        <dbReference type="PDB" id="3BT4"/>
    </source>
</evidence>
<gene>
    <name evidence="4" type="primary">fpi-1</name>
</gene>
<keyword id="KW-0002">3D-structure</keyword>
<keyword id="KW-0903">Direct protein sequencing</keyword>
<keyword id="KW-1015">Disulfide bond</keyword>
<keyword id="KW-0646">Protease inhibitor</keyword>
<keyword id="KW-0722">Serine protease inhibitor</keyword>
<keyword id="KW-0732">Signal</keyword>
<name>FPI1_ANTMY</name>
<comment type="function">
    <text evidence="1">Inhibits proteases from the fungi A.oryzae and R.oryzae, trypsin and chymotrypsin. Does not inhibit protease from the bacterium B.licheniformis or papain.</text>
</comment>
<accession>B0JFB8</accession>
<dbReference type="EMBL" id="AM939570">
    <property type="protein sequence ID" value="CAP74000.1"/>
    <property type="molecule type" value="mRNA"/>
</dbReference>
<dbReference type="EMBL" id="EU375895">
    <property type="protein sequence ID" value="ABY83296.1"/>
    <property type="molecule type" value="mRNA"/>
</dbReference>
<dbReference type="PDB" id="3BT4">
    <property type="method" value="X-ray"/>
    <property type="resolution" value="2.10 A"/>
    <property type="chains" value="A=20-105"/>
</dbReference>
<dbReference type="PDBsum" id="3BT4"/>
<dbReference type="SMR" id="B0JFB8"/>
<dbReference type="MEROPS" id="I83.001"/>
<dbReference type="EvolutionaryTrace" id="B0JFB8"/>
<dbReference type="GO" id="GO:0004867">
    <property type="term" value="F:serine-type endopeptidase inhibitor activity"/>
    <property type="evidence" value="ECO:0007669"/>
    <property type="project" value="UniProtKB-KW"/>
</dbReference>
<dbReference type="Gene3D" id="2.10.80.20">
    <property type="match status" value="1"/>
</dbReference>
<dbReference type="InterPro" id="IPR021066">
    <property type="entry name" value="FPI1"/>
</dbReference>
<dbReference type="InterPro" id="IPR053741">
    <property type="entry name" value="Ser_Fungal_Prot_Inhib_sf"/>
</dbReference>
<dbReference type="Pfam" id="PF12190">
    <property type="entry name" value="amfpi-1"/>
    <property type="match status" value="1"/>
</dbReference>
<proteinExistence type="evidence at protein level"/>
<reference evidence="3 4" key="1">
    <citation type="journal article" date="2003" name="Insect Biochem. Mol. Biol.">
        <title>Protein purification, cDNA cloning and characterization of a protease inhibitor from the Indian tasar silkworm, Antheraea mylitta.</title>
        <authorList>
            <person name="Shrivastava B."/>
            <person name="Ghosh A.K."/>
        </authorList>
    </citation>
    <scope>NUCLEOTIDE SEQUENCE [MRNA]</scope>
    <scope>PROTEIN SEQUENCE OF 20-34</scope>
    <scope>FUNCTION</scope>
    <source>
        <tissue evidence="1">Hemolymph</tissue>
        <tissue evidence="4">Integument</tissue>
    </source>
</reference>
<reference key="2">
    <citation type="journal article" date="2009" name="J. Struct. Biol.">
        <title>Crystal structure of a fungal protease inhibitor from Antheraea mylitta.</title>
        <authorList>
            <person name="Roy S."/>
            <person name="Aravind P."/>
            <person name="Madhurantakam C."/>
            <person name="Ghosh A.K."/>
            <person name="Sankaranarayanan R."/>
            <person name="Das A.K."/>
        </authorList>
    </citation>
    <scope>X-RAY CRYSTALLOGRAPHY (2.1 ANGSTROMS) OF 20-105</scope>
    <scope>DISULFIDE BONDS</scope>
</reference>
<organism>
    <name type="scientific">Antheraea mylitta</name>
    <name type="common">Tasar silkworm</name>
    <dbReference type="NCBI Taxonomy" id="34739"/>
    <lineage>
        <taxon>Eukaryota</taxon>
        <taxon>Metazoa</taxon>
        <taxon>Ecdysozoa</taxon>
        <taxon>Arthropoda</taxon>
        <taxon>Hexapoda</taxon>
        <taxon>Insecta</taxon>
        <taxon>Pterygota</taxon>
        <taxon>Neoptera</taxon>
        <taxon>Endopterygota</taxon>
        <taxon>Lepidoptera</taxon>
        <taxon>Glossata</taxon>
        <taxon>Ditrysia</taxon>
        <taxon>Bombycoidea</taxon>
        <taxon>Saturniidae</taxon>
        <taxon>Saturniinae</taxon>
        <taxon>Saturniini</taxon>
        <taxon>Antheraea</taxon>
    </lineage>
</organism>
<feature type="signal peptide" evidence="1">
    <location>
        <begin position="1"/>
        <end position="19"/>
    </location>
</feature>
<feature type="chain" id="PRO_5000304145" description="Fungal protease inhibitor-1" evidence="1">
    <location>
        <begin position="20"/>
        <end position="105"/>
    </location>
</feature>
<feature type="disulfide bond" evidence="2">
    <location>
        <begin position="23"/>
        <end position="56"/>
    </location>
</feature>
<feature type="disulfide bond" evidence="2">
    <location>
        <begin position="28"/>
        <end position="58"/>
    </location>
</feature>
<feature type="disulfide bond" evidence="2">
    <location>
        <begin position="33"/>
        <end position="59"/>
    </location>
</feature>
<feature type="disulfide bond" evidence="2">
    <location>
        <begin position="42"/>
        <end position="62"/>
    </location>
</feature>
<feature type="disulfide bond" evidence="2">
    <location>
        <begin position="72"/>
        <end position="93"/>
    </location>
</feature>
<feature type="disulfide bond" evidence="2">
    <location>
        <begin position="87"/>
        <end position="98"/>
    </location>
</feature>
<feature type="helix" evidence="5">
    <location>
        <begin position="27"/>
        <end position="30"/>
    </location>
</feature>
<feature type="helix" evidence="5">
    <location>
        <begin position="39"/>
        <end position="41"/>
    </location>
</feature>
<feature type="strand" evidence="5">
    <location>
        <begin position="46"/>
        <end position="54"/>
    </location>
</feature>
<feature type="helix" evidence="5">
    <location>
        <begin position="55"/>
        <end position="57"/>
    </location>
</feature>
<feature type="strand" evidence="5">
    <location>
        <begin position="59"/>
        <end position="66"/>
    </location>
</feature>
<feature type="turn" evidence="5">
    <location>
        <begin position="77"/>
        <end position="80"/>
    </location>
</feature>
<feature type="strand" evidence="5">
    <location>
        <begin position="84"/>
        <end position="87"/>
    </location>
</feature>
<feature type="strand" evidence="5">
    <location>
        <begin position="92"/>
        <end position="94"/>
    </location>
</feature>
<feature type="strand" evidence="5">
    <location>
        <begin position="97"/>
        <end position="99"/>
    </location>
</feature>
<sequence length="105" mass="11330">MKAVITLLFLACILVVTYGDLICGTNYCKDHPCTSPIARASCRSPATYRANHSGKCACCPACVTLLRERAACKTYSKEIGETPSAVCQEPLKCLNGVCTKVTPRR</sequence>
<protein>
    <recommendedName>
        <fullName>Fungal protease inhibitor-1</fullName>
    </recommendedName>
</protein>